<protein>
    <recommendedName>
        <fullName evidence="1">Histidinol-phosphate aminotransferase</fullName>
        <ecNumber evidence="1">2.6.1.9</ecNumber>
    </recommendedName>
    <alternativeName>
        <fullName evidence="1">Imidazole acetol-phosphate transaminase</fullName>
    </alternativeName>
</protein>
<comment type="catalytic activity">
    <reaction evidence="1">
        <text>L-histidinol phosphate + 2-oxoglutarate = 3-(imidazol-4-yl)-2-oxopropyl phosphate + L-glutamate</text>
        <dbReference type="Rhea" id="RHEA:23744"/>
        <dbReference type="ChEBI" id="CHEBI:16810"/>
        <dbReference type="ChEBI" id="CHEBI:29985"/>
        <dbReference type="ChEBI" id="CHEBI:57766"/>
        <dbReference type="ChEBI" id="CHEBI:57980"/>
        <dbReference type="EC" id="2.6.1.9"/>
    </reaction>
</comment>
<comment type="cofactor">
    <cofactor evidence="1">
        <name>pyridoxal 5'-phosphate</name>
        <dbReference type="ChEBI" id="CHEBI:597326"/>
    </cofactor>
</comment>
<comment type="pathway">
    <text evidence="1">Amino-acid biosynthesis; L-histidine biosynthesis; L-histidine from 5-phospho-alpha-D-ribose 1-diphosphate: step 7/9.</text>
</comment>
<comment type="similarity">
    <text evidence="1">Belongs to the class-II pyridoxal-phosphate-dependent aminotransferase family. Histidinol-phosphate aminotransferase subfamily.</text>
</comment>
<reference key="1">
    <citation type="journal article" date="2009" name="Stand. Genomic Sci.">
        <title>Complete genome sequence of Methanocorpusculum labreanum type strain Z.</title>
        <authorList>
            <person name="Anderson I.J."/>
            <person name="Sieprawska-Lupa M."/>
            <person name="Goltsman E."/>
            <person name="Lapidus A."/>
            <person name="Copeland A."/>
            <person name="Glavina Del Rio T."/>
            <person name="Tice H."/>
            <person name="Dalin E."/>
            <person name="Barry K."/>
            <person name="Pitluck S."/>
            <person name="Hauser L."/>
            <person name="Land M."/>
            <person name="Lucas S."/>
            <person name="Richardson P."/>
            <person name="Whitman W.B."/>
            <person name="Kyrpides N.C."/>
        </authorList>
    </citation>
    <scope>NUCLEOTIDE SEQUENCE [LARGE SCALE GENOMIC DNA]</scope>
    <source>
        <strain>ATCC 43576 / DSM 4855 / Z</strain>
    </source>
</reference>
<gene>
    <name evidence="1" type="primary">hisC</name>
    <name type="ordered locus">Mlab_1128</name>
</gene>
<organism>
    <name type="scientific">Methanocorpusculum labreanum (strain ATCC 43576 / DSM 4855 / Z)</name>
    <dbReference type="NCBI Taxonomy" id="410358"/>
    <lineage>
        <taxon>Archaea</taxon>
        <taxon>Methanobacteriati</taxon>
        <taxon>Methanobacteriota</taxon>
        <taxon>Stenosarchaea group</taxon>
        <taxon>Methanomicrobia</taxon>
        <taxon>Methanomicrobiales</taxon>
        <taxon>Methanocorpusculaceae</taxon>
        <taxon>Methanocorpusculum</taxon>
    </lineage>
</organism>
<sequence length="351" mass="38283">MKPRVRSEFVKSGYVFAKSPADIAKEYGFTEVAMLGSNENPYPPSDKVLRAAEAELSGVNRYPDPKAAAFHAALRTYICDCPVVTSGLGMDGVIETVIRTIVEPGDKVVISTPTFSMYGLAAKAASARVVNVSRSADFSVDLDTFLNEAKDARLSFLCTPNNPTGTVTPVEDIEYILDRIEGVLFLDCAYVEFSDINYLPLLSRDNLIIGRTMSKVYGLAGLRIGYAFVPEWLEAPYNIAATPFTMNRLSEAAASVAVSDAAYRESFIAHVQKWRDVFMQEIPFPVYPSGSNFILINVAPQKGDAAAESLAKHGVLVRSCTSFPGLGDTFIRVSVGADWENERFLAAVKKL</sequence>
<accession>A2SSJ1</accession>
<feature type="chain" id="PRO_1000149102" description="Histidinol-phosphate aminotransferase">
    <location>
        <begin position="1"/>
        <end position="351"/>
    </location>
</feature>
<feature type="modified residue" description="N6-(pyridoxal phosphate)lysine" evidence="1">
    <location>
        <position position="215"/>
    </location>
</feature>
<evidence type="ECO:0000255" key="1">
    <source>
        <dbReference type="HAMAP-Rule" id="MF_01023"/>
    </source>
</evidence>
<proteinExistence type="inferred from homology"/>
<dbReference type="EC" id="2.6.1.9" evidence="1"/>
<dbReference type="EMBL" id="CP000559">
    <property type="protein sequence ID" value="ABN07297.1"/>
    <property type="molecule type" value="Genomic_DNA"/>
</dbReference>
<dbReference type="RefSeq" id="WP_011833500.1">
    <property type="nucleotide sequence ID" value="NC_008942.1"/>
</dbReference>
<dbReference type="SMR" id="A2SSJ1"/>
<dbReference type="STRING" id="410358.Mlab_1128"/>
<dbReference type="GeneID" id="4795647"/>
<dbReference type="KEGG" id="mla:Mlab_1128"/>
<dbReference type="eggNOG" id="arCOG04273">
    <property type="taxonomic scope" value="Archaea"/>
</dbReference>
<dbReference type="HOGENOM" id="CLU_017584_3_3_2"/>
<dbReference type="OrthoDB" id="9929at2157"/>
<dbReference type="UniPathway" id="UPA00031">
    <property type="reaction ID" value="UER00012"/>
</dbReference>
<dbReference type="Proteomes" id="UP000000365">
    <property type="component" value="Chromosome"/>
</dbReference>
<dbReference type="GO" id="GO:0004400">
    <property type="term" value="F:histidinol-phosphate transaminase activity"/>
    <property type="evidence" value="ECO:0007669"/>
    <property type="project" value="UniProtKB-UniRule"/>
</dbReference>
<dbReference type="GO" id="GO:0030170">
    <property type="term" value="F:pyridoxal phosphate binding"/>
    <property type="evidence" value="ECO:0007669"/>
    <property type="project" value="InterPro"/>
</dbReference>
<dbReference type="GO" id="GO:0000105">
    <property type="term" value="P:L-histidine biosynthetic process"/>
    <property type="evidence" value="ECO:0007669"/>
    <property type="project" value="UniProtKB-UniRule"/>
</dbReference>
<dbReference type="CDD" id="cd00609">
    <property type="entry name" value="AAT_like"/>
    <property type="match status" value="1"/>
</dbReference>
<dbReference type="Gene3D" id="3.90.1150.10">
    <property type="entry name" value="Aspartate Aminotransferase, domain 1"/>
    <property type="match status" value="1"/>
</dbReference>
<dbReference type="Gene3D" id="3.40.640.10">
    <property type="entry name" value="Type I PLP-dependent aspartate aminotransferase-like (Major domain)"/>
    <property type="match status" value="1"/>
</dbReference>
<dbReference type="HAMAP" id="MF_01023">
    <property type="entry name" value="HisC_aminotrans_2"/>
    <property type="match status" value="1"/>
</dbReference>
<dbReference type="InterPro" id="IPR004839">
    <property type="entry name" value="Aminotransferase_I/II_large"/>
</dbReference>
<dbReference type="InterPro" id="IPR005861">
    <property type="entry name" value="HisP_aminotrans"/>
</dbReference>
<dbReference type="InterPro" id="IPR015424">
    <property type="entry name" value="PyrdxlP-dep_Trfase"/>
</dbReference>
<dbReference type="InterPro" id="IPR015421">
    <property type="entry name" value="PyrdxlP-dep_Trfase_major"/>
</dbReference>
<dbReference type="InterPro" id="IPR015422">
    <property type="entry name" value="PyrdxlP-dep_Trfase_small"/>
</dbReference>
<dbReference type="NCBIfam" id="TIGR01141">
    <property type="entry name" value="hisC"/>
    <property type="match status" value="1"/>
</dbReference>
<dbReference type="PANTHER" id="PTHR42885:SF2">
    <property type="entry name" value="HISTIDINOL-PHOSPHATE AMINOTRANSFERASE"/>
    <property type="match status" value="1"/>
</dbReference>
<dbReference type="PANTHER" id="PTHR42885">
    <property type="entry name" value="HISTIDINOL-PHOSPHATE AMINOTRANSFERASE-RELATED"/>
    <property type="match status" value="1"/>
</dbReference>
<dbReference type="Pfam" id="PF00155">
    <property type="entry name" value="Aminotran_1_2"/>
    <property type="match status" value="1"/>
</dbReference>
<dbReference type="SUPFAM" id="SSF53383">
    <property type="entry name" value="PLP-dependent transferases"/>
    <property type="match status" value="1"/>
</dbReference>
<keyword id="KW-0028">Amino-acid biosynthesis</keyword>
<keyword id="KW-0032">Aminotransferase</keyword>
<keyword id="KW-0368">Histidine biosynthesis</keyword>
<keyword id="KW-0663">Pyridoxal phosphate</keyword>
<keyword id="KW-1185">Reference proteome</keyword>
<keyword id="KW-0808">Transferase</keyword>
<name>HIS8_METLZ</name>